<accession>Q66EZ0</accession>
<comment type="function">
    <text evidence="1">Part of the ABC transporter complex LsrABCD involved in autoinducer 2 (AI-2) import. Probably responsible for the translocation of the substrate across the membrane (By similarity).</text>
</comment>
<comment type="subunit">
    <text evidence="1">The complex is composed of two ATP-binding proteins (LsrA), two transmembrane proteins (LsrC and LsrD) and a solute-binding protein (LsrB).</text>
</comment>
<comment type="subcellular location">
    <subcellularLocation>
        <location evidence="1">Cell inner membrane</location>
        <topology evidence="1">Multi-pass membrane protein</topology>
    </subcellularLocation>
</comment>
<comment type="similarity">
    <text evidence="3">Belongs to the binding-protein-dependent transport system permease family. AraH/RbsC subfamily.</text>
</comment>
<dbReference type="EMBL" id="BX936398">
    <property type="protein sequence ID" value="CAH19791.1"/>
    <property type="molecule type" value="Genomic_DNA"/>
</dbReference>
<dbReference type="RefSeq" id="WP_011191664.1">
    <property type="nucleotide sequence ID" value="NC_006155.1"/>
</dbReference>
<dbReference type="KEGG" id="ypo:BZ17_2008"/>
<dbReference type="KEGG" id="yps:YPTB0551"/>
<dbReference type="PATRIC" id="fig|273123.14.peg.2134"/>
<dbReference type="Proteomes" id="UP000001011">
    <property type="component" value="Chromosome"/>
</dbReference>
<dbReference type="GO" id="GO:0005886">
    <property type="term" value="C:plasma membrane"/>
    <property type="evidence" value="ECO:0007669"/>
    <property type="project" value="UniProtKB-SubCell"/>
</dbReference>
<dbReference type="GO" id="GO:0022857">
    <property type="term" value="F:transmembrane transporter activity"/>
    <property type="evidence" value="ECO:0007669"/>
    <property type="project" value="InterPro"/>
</dbReference>
<dbReference type="CDD" id="cd06579">
    <property type="entry name" value="TM_PBP1_transp_AraH_like"/>
    <property type="match status" value="1"/>
</dbReference>
<dbReference type="InterPro" id="IPR001851">
    <property type="entry name" value="ABC_transp_permease"/>
</dbReference>
<dbReference type="NCBIfam" id="NF011961">
    <property type="entry name" value="PRK15432.1"/>
    <property type="match status" value="1"/>
</dbReference>
<dbReference type="PANTHER" id="PTHR32196">
    <property type="entry name" value="ABC TRANSPORTER PERMEASE PROTEIN YPHD-RELATED-RELATED"/>
    <property type="match status" value="1"/>
</dbReference>
<dbReference type="PANTHER" id="PTHR32196:SF29">
    <property type="entry name" value="AUTOINDUCER 2 IMPORT SYSTEM PERMEASE PROTEIN LSRC"/>
    <property type="match status" value="1"/>
</dbReference>
<dbReference type="Pfam" id="PF02653">
    <property type="entry name" value="BPD_transp_2"/>
    <property type="match status" value="1"/>
</dbReference>
<reference key="1">
    <citation type="journal article" date="2004" name="Proc. Natl. Acad. Sci. U.S.A.">
        <title>Insights into the evolution of Yersinia pestis through whole-genome comparison with Yersinia pseudotuberculosis.</title>
        <authorList>
            <person name="Chain P.S.G."/>
            <person name="Carniel E."/>
            <person name="Larimer F.W."/>
            <person name="Lamerdin J."/>
            <person name="Stoutland P.O."/>
            <person name="Regala W.M."/>
            <person name="Georgescu A.M."/>
            <person name="Vergez L.M."/>
            <person name="Land M.L."/>
            <person name="Motin V.L."/>
            <person name="Brubaker R.R."/>
            <person name="Fowler J."/>
            <person name="Hinnebusch J."/>
            <person name="Marceau M."/>
            <person name="Medigue C."/>
            <person name="Simonet M."/>
            <person name="Chenal-Francisque V."/>
            <person name="Souza B."/>
            <person name="Dacheux D."/>
            <person name="Elliott J.M."/>
            <person name="Derbise A."/>
            <person name="Hauser L.J."/>
            <person name="Garcia E."/>
        </authorList>
    </citation>
    <scope>NUCLEOTIDE SEQUENCE [LARGE SCALE GENOMIC DNA]</scope>
    <source>
        <strain>IP32953</strain>
    </source>
</reference>
<gene>
    <name type="primary">lsrC</name>
    <name type="ordered locus">YPTB0551</name>
</gene>
<organism>
    <name type="scientific">Yersinia pseudotuberculosis serotype I (strain IP32953)</name>
    <dbReference type="NCBI Taxonomy" id="273123"/>
    <lineage>
        <taxon>Bacteria</taxon>
        <taxon>Pseudomonadati</taxon>
        <taxon>Pseudomonadota</taxon>
        <taxon>Gammaproteobacteria</taxon>
        <taxon>Enterobacterales</taxon>
        <taxon>Yersiniaceae</taxon>
        <taxon>Yersinia</taxon>
    </lineage>
</organism>
<evidence type="ECO:0000250" key="1"/>
<evidence type="ECO:0000255" key="2"/>
<evidence type="ECO:0000305" key="3"/>
<name>LSRC_YERPS</name>
<proteinExistence type="inferred from homology"/>
<feature type="chain" id="PRO_0000351359" description="Autoinducer 2 import system permease protein LsrC">
    <location>
        <begin position="1"/>
        <end position="351"/>
    </location>
</feature>
<feature type="transmembrane region" description="Helical" evidence="2">
    <location>
        <begin position="14"/>
        <end position="34"/>
    </location>
</feature>
<feature type="transmembrane region" description="Helical" evidence="2">
    <location>
        <begin position="39"/>
        <end position="59"/>
    </location>
</feature>
<feature type="transmembrane region" description="Helical" evidence="2">
    <location>
        <begin position="70"/>
        <end position="90"/>
    </location>
</feature>
<feature type="transmembrane region" description="Helical" evidence="2">
    <location>
        <begin position="93"/>
        <end position="113"/>
    </location>
</feature>
<feature type="transmembrane region" description="Helical" evidence="2">
    <location>
        <begin position="115"/>
        <end position="135"/>
    </location>
</feature>
<feature type="transmembrane region" description="Helical" evidence="2">
    <location>
        <begin position="155"/>
        <end position="175"/>
    </location>
</feature>
<feature type="transmembrane region" description="Helical" evidence="2">
    <location>
        <begin position="213"/>
        <end position="233"/>
    </location>
</feature>
<feature type="transmembrane region" description="Helical" evidence="2">
    <location>
        <begin position="252"/>
        <end position="272"/>
    </location>
</feature>
<feature type="transmembrane region" description="Helical" evidence="2">
    <location>
        <begin position="284"/>
        <end position="304"/>
    </location>
</feature>
<keyword id="KW-0997">Cell inner membrane</keyword>
<keyword id="KW-1003">Cell membrane</keyword>
<keyword id="KW-0472">Membrane</keyword>
<keyword id="KW-0812">Transmembrane</keyword>
<keyword id="KW-1133">Transmembrane helix</keyword>
<keyword id="KW-0813">Transport</keyword>
<protein>
    <recommendedName>
        <fullName>Autoinducer 2 import system permease protein LsrC</fullName>
        <shortName>AI-2 import system permease protein LsrC</shortName>
    </recommendedName>
</protein>
<sequence>MLKFIQNNREGTALLAILTLFALLGIIDRNYFSLQTFTMIFSSAQILILLAIGATLVMLTRNIDVSVGSITGLCAVTVGMALNAGFGLVASCLFALLVGMVAGFFNGILVTWLRIPAIVATLGTLGLYRGLMLLLTGGKWIEGLPADLKSLSTPILFSISPIGWLTMLLILSMAWLLGNTAFGRSFYATGDNLQGARQLGVRTDSIRIFAFSMNGVMAALAGIVFASQIGFIPNQTGNGLEMKAIAACVLGGISLLGGTGTIIGAILGAFLLTQIDSVLVLLRLPAWWNDFIAGLVLLGVLVFDGRLRCAVERNIRQQKYARFTAQAIISDKKPTVSDNNPAASNKKKAAL</sequence>